<accession>Q17ZJ0</accession>
<proteinExistence type="inferred from homology"/>
<keyword id="KW-0997">Cell inner membrane</keyword>
<keyword id="KW-1003">Cell membrane</keyword>
<keyword id="KW-0444">Lipid biosynthesis</keyword>
<keyword id="KW-0443">Lipid metabolism</keyword>
<keyword id="KW-0472">Membrane</keyword>
<keyword id="KW-0594">Phospholipid biosynthesis</keyword>
<keyword id="KW-1208">Phospholipid metabolism</keyword>
<keyword id="KW-0808">Transferase</keyword>
<keyword id="KW-0812">Transmembrane</keyword>
<keyword id="KW-1133">Transmembrane helix</keyword>
<comment type="function">
    <text evidence="1">Catalyzes the transfer of an acyl group from acyl-phosphate (acyl-PO(4)) to glycerol-3-phosphate (G3P) to form lysophosphatidic acid (LPA). This enzyme utilizes acyl-phosphate as fatty acyl donor, but not acyl-CoA or acyl-ACP.</text>
</comment>
<comment type="catalytic activity">
    <reaction evidence="1">
        <text>an acyl phosphate + sn-glycerol 3-phosphate = a 1-acyl-sn-glycero-3-phosphate + phosphate</text>
        <dbReference type="Rhea" id="RHEA:34075"/>
        <dbReference type="ChEBI" id="CHEBI:43474"/>
        <dbReference type="ChEBI" id="CHEBI:57597"/>
        <dbReference type="ChEBI" id="CHEBI:57970"/>
        <dbReference type="ChEBI" id="CHEBI:59918"/>
        <dbReference type="EC" id="2.3.1.275"/>
    </reaction>
</comment>
<comment type="pathway">
    <text evidence="1">Lipid metabolism; phospholipid metabolism.</text>
</comment>
<comment type="subunit">
    <text evidence="1">Probably interacts with PlsX.</text>
</comment>
<comment type="subcellular location">
    <subcellularLocation>
        <location evidence="1">Cell inner membrane</location>
        <topology evidence="1">Multi-pass membrane protein</topology>
    </subcellularLocation>
</comment>
<comment type="similarity">
    <text evidence="1">Belongs to the PlsY family.</text>
</comment>
<sequence>MDGVLNFLTNINVIFTLLGYLIGGIPFGYALMKIFYGMDITKIGSGGIGATNVLRTLQSRGVSNAKQMALLILILDLFKGMFAVFLSKLFGLDYSLQWMVAIASILGHCYSPFLNFNGGKGVSTIMGSVVLLIPIESLIGLMVWFFVGKVLKISSLASIVGVGTATILIFFVPYMHIPDSVNILKEVGTQTPMVLIFIFTLIKHVGNIFNLLAGKEKKVL</sequence>
<protein>
    <recommendedName>
        <fullName evidence="1">Glycerol-3-phosphate acyltransferase</fullName>
    </recommendedName>
    <alternativeName>
        <fullName evidence="1">Acyl-PO4 G3P acyltransferase</fullName>
    </alternativeName>
    <alternativeName>
        <fullName evidence="1">Acyl-phosphate--glycerol-3-phosphate acyltransferase</fullName>
    </alternativeName>
    <alternativeName>
        <fullName evidence="1">G3P acyltransferase</fullName>
        <shortName evidence="1">GPAT</shortName>
        <ecNumber evidence="1">2.3.1.275</ecNumber>
    </alternativeName>
    <alternativeName>
        <fullName evidence="1">Lysophosphatidic acid synthase</fullName>
        <shortName evidence="1">LPA synthase</shortName>
    </alternativeName>
</protein>
<reference key="1">
    <citation type="journal article" date="2006" name="PLoS Genet.">
        <title>Who ate whom? Adaptive Helicobacter genomic changes that accompanied a host jump from early humans to large felines.</title>
        <authorList>
            <person name="Eppinger M."/>
            <person name="Baar C."/>
            <person name="Linz B."/>
            <person name="Raddatz G."/>
            <person name="Lanz C."/>
            <person name="Keller H."/>
            <person name="Morelli G."/>
            <person name="Gressmann H."/>
            <person name="Achtman M."/>
            <person name="Schuster S.C."/>
        </authorList>
    </citation>
    <scope>NUCLEOTIDE SEQUENCE [LARGE SCALE GENOMIC DNA]</scope>
    <source>
        <strain>Sheeba</strain>
    </source>
</reference>
<dbReference type="EC" id="2.3.1.275" evidence="1"/>
<dbReference type="EMBL" id="AM260522">
    <property type="protein sequence ID" value="CAJ98936.1"/>
    <property type="molecule type" value="Genomic_DNA"/>
</dbReference>
<dbReference type="RefSeq" id="WP_011577058.1">
    <property type="nucleotide sequence ID" value="NC_008229.1"/>
</dbReference>
<dbReference type="SMR" id="Q17ZJ0"/>
<dbReference type="STRING" id="382638.Hac_0075"/>
<dbReference type="GeneID" id="31757623"/>
<dbReference type="KEGG" id="hac:Hac_0075"/>
<dbReference type="eggNOG" id="COG0344">
    <property type="taxonomic scope" value="Bacteria"/>
</dbReference>
<dbReference type="HOGENOM" id="CLU_081254_2_0_7"/>
<dbReference type="UniPathway" id="UPA00085"/>
<dbReference type="Proteomes" id="UP000000775">
    <property type="component" value="Chromosome"/>
</dbReference>
<dbReference type="GO" id="GO:0005886">
    <property type="term" value="C:plasma membrane"/>
    <property type="evidence" value="ECO:0007669"/>
    <property type="project" value="UniProtKB-SubCell"/>
</dbReference>
<dbReference type="GO" id="GO:0043772">
    <property type="term" value="F:acyl-phosphate glycerol-3-phosphate acyltransferase activity"/>
    <property type="evidence" value="ECO:0007669"/>
    <property type="project" value="UniProtKB-UniRule"/>
</dbReference>
<dbReference type="GO" id="GO:0008654">
    <property type="term" value="P:phospholipid biosynthetic process"/>
    <property type="evidence" value="ECO:0007669"/>
    <property type="project" value="UniProtKB-UniRule"/>
</dbReference>
<dbReference type="HAMAP" id="MF_01043">
    <property type="entry name" value="PlsY"/>
    <property type="match status" value="1"/>
</dbReference>
<dbReference type="InterPro" id="IPR003811">
    <property type="entry name" value="G3P_acylTferase_PlsY"/>
</dbReference>
<dbReference type="NCBIfam" id="TIGR00023">
    <property type="entry name" value="glycerol-3-phosphate 1-O-acyltransferase PlsY"/>
    <property type="match status" value="1"/>
</dbReference>
<dbReference type="PANTHER" id="PTHR30309:SF0">
    <property type="entry name" value="GLYCEROL-3-PHOSPHATE ACYLTRANSFERASE-RELATED"/>
    <property type="match status" value="1"/>
</dbReference>
<dbReference type="PANTHER" id="PTHR30309">
    <property type="entry name" value="INNER MEMBRANE PROTEIN YGIH"/>
    <property type="match status" value="1"/>
</dbReference>
<dbReference type="Pfam" id="PF02660">
    <property type="entry name" value="G3P_acyltransf"/>
    <property type="match status" value="1"/>
</dbReference>
<dbReference type="SMART" id="SM01207">
    <property type="entry name" value="G3P_acyltransf"/>
    <property type="match status" value="1"/>
</dbReference>
<gene>
    <name evidence="1" type="primary">plsY</name>
    <name type="ordered locus">Hac_0075</name>
</gene>
<feature type="chain" id="PRO_1000064184" description="Glycerol-3-phosphate acyltransferase">
    <location>
        <begin position="1"/>
        <end position="220"/>
    </location>
</feature>
<feature type="transmembrane region" description="Helical" evidence="1">
    <location>
        <begin position="11"/>
        <end position="31"/>
    </location>
</feature>
<feature type="transmembrane region" description="Helical" evidence="1">
    <location>
        <begin position="70"/>
        <end position="90"/>
    </location>
</feature>
<feature type="transmembrane region" description="Helical" evidence="1">
    <location>
        <begin position="96"/>
        <end position="116"/>
    </location>
</feature>
<feature type="transmembrane region" description="Helical" evidence="1">
    <location>
        <begin position="127"/>
        <end position="147"/>
    </location>
</feature>
<feature type="transmembrane region" description="Helical" evidence="1">
    <location>
        <begin position="153"/>
        <end position="173"/>
    </location>
</feature>
<feature type="transmembrane region" description="Helical" evidence="1">
    <location>
        <begin position="193"/>
        <end position="213"/>
    </location>
</feature>
<name>PLSY_HELAH</name>
<evidence type="ECO:0000255" key="1">
    <source>
        <dbReference type="HAMAP-Rule" id="MF_01043"/>
    </source>
</evidence>
<organism>
    <name type="scientific">Helicobacter acinonychis (strain Sheeba)</name>
    <dbReference type="NCBI Taxonomy" id="382638"/>
    <lineage>
        <taxon>Bacteria</taxon>
        <taxon>Pseudomonadati</taxon>
        <taxon>Campylobacterota</taxon>
        <taxon>Epsilonproteobacteria</taxon>
        <taxon>Campylobacterales</taxon>
        <taxon>Helicobacteraceae</taxon>
        <taxon>Helicobacter</taxon>
    </lineage>
</organism>